<dbReference type="BMRB" id="P0DMJ6"/>
<dbReference type="SMR" id="P0DMJ6"/>
<dbReference type="GO" id="GO:0005576">
    <property type="term" value="C:extracellular region"/>
    <property type="evidence" value="ECO:0007669"/>
    <property type="project" value="UniProtKB-SubCell"/>
</dbReference>
<dbReference type="GO" id="GO:0015459">
    <property type="term" value="F:potassium channel regulator activity"/>
    <property type="evidence" value="ECO:0007669"/>
    <property type="project" value="UniProtKB-KW"/>
</dbReference>
<dbReference type="GO" id="GO:0004867">
    <property type="term" value="F:serine-type endopeptidase inhibitor activity"/>
    <property type="evidence" value="ECO:0007669"/>
    <property type="project" value="UniProtKB-KW"/>
</dbReference>
<dbReference type="GO" id="GO:0090729">
    <property type="term" value="F:toxin activity"/>
    <property type="evidence" value="ECO:0007669"/>
    <property type="project" value="UniProtKB-KW"/>
</dbReference>
<dbReference type="CDD" id="cd22595">
    <property type="entry name" value="Kunitz_dendrotoxin"/>
    <property type="match status" value="1"/>
</dbReference>
<dbReference type="FunFam" id="4.10.410.10:FF:000021">
    <property type="entry name" value="Serine protease inhibitor, putative"/>
    <property type="match status" value="1"/>
</dbReference>
<dbReference type="Gene3D" id="4.10.410.10">
    <property type="entry name" value="Pancreatic trypsin inhibitor Kunitz domain"/>
    <property type="match status" value="1"/>
</dbReference>
<dbReference type="InterPro" id="IPR002223">
    <property type="entry name" value="Kunitz_BPTI"/>
</dbReference>
<dbReference type="InterPro" id="IPR036880">
    <property type="entry name" value="Kunitz_BPTI_sf"/>
</dbReference>
<dbReference type="InterPro" id="IPR020901">
    <property type="entry name" value="Prtase_inh_Kunz-CS"/>
</dbReference>
<dbReference type="InterPro" id="IPR050098">
    <property type="entry name" value="TFPI/VKTCI-like"/>
</dbReference>
<dbReference type="PANTHER" id="PTHR10083">
    <property type="entry name" value="KUNITZ-TYPE PROTEASE INHIBITOR-RELATED"/>
    <property type="match status" value="1"/>
</dbReference>
<dbReference type="Pfam" id="PF00014">
    <property type="entry name" value="Kunitz_BPTI"/>
    <property type="match status" value="1"/>
</dbReference>
<dbReference type="PRINTS" id="PR00759">
    <property type="entry name" value="BASICPTASE"/>
</dbReference>
<dbReference type="SMART" id="SM00131">
    <property type="entry name" value="KU"/>
    <property type="match status" value="1"/>
</dbReference>
<dbReference type="SUPFAM" id="SSF57362">
    <property type="entry name" value="BPTI-like"/>
    <property type="match status" value="1"/>
</dbReference>
<dbReference type="PROSITE" id="PS00280">
    <property type="entry name" value="BPTI_KUNITZ_1"/>
    <property type="match status" value="1"/>
</dbReference>
<dbReference type="PROSITE" id="PS50279">
    <property type="entry name" value="BPTI_KUNITZ_2"/>
    <property type="match status" value="1"/>
</dbReference>
<keyword id="KW-0903">Direct protein sequencing</keyword>
<keyword id="KW-1015">Disulfide bond</keyword>
<keyword id="KW-0872">Ion channel impairing toxin</keyword>
<keyword id="KW-0632">Potassium channel impairing toxin</keyword>
<keyword id="KW-0646">Protease inhibitor</keyword>
<keyword id="KW-0964">Secreted</keyword>
<keyword id="KW-0722">Serine protease inhibitor</keyword>
<keyword id="KW-0800">Toxin</keyword>
<keyword id="KW-1220">Voltage-gated potassium channel impairing toxin</keyword>
<accession>P0DMJ6</accession>
<protein>
    <recommendedName>
        <fullName>Kunitz-type serine protease inhibitor dendrotoxin DaE1</fullName>
    </recommendedName>
    <component>
        <recommendedName>
            <fullName>Kunitz-type protease inhibitor dendrotoxin DaE2</fullName>
        </recommendedName>
    </component>
</protein>
<feature type="chain" id="PRO_0000429468" description="Kunitz-type serine protease inhibitor dendrotoxin DaE1">
    <location>
        <begin position="1"/>
        <end position="59"/>
    </location>
</feature>
<feature type="chain" id="PRO_0000429469" description="Kunitz-type protease inhibitor dendrotoxin DaE2">
    <location>
        <begin position="3"/>
        <end position="59"/>
    </location>
</feature>
<feature type="domain" description="BPTI/Kunitz inhibitor" evidence="2">
    <location>
        <begin position="7"/>
        <end position="57"/>
    </location>
</feature>
<feature type="site" description="Reactive bond for trypsin" evidence="1">
    <location>
        <begin position="17"/>
        <end position="18"/>
    </location>
</feature>
<feature type="disulfide bond" evidence="2">
    <location>
        <begin position="7"/>
        <end position="57"/>
    </location>
</feature>
<feature type="disulfide bond" evidence="2">
    <location>
        <begin position="16"/>
        <end position="40"/>
    </location>
</feature>
<feature type="disulfide bond" evidence="2">
    <location>
        <begin position="32"/>
        <end position="53"/>
    </location>
</feature>
<name>VKT12_DENAN</name>
<sequence>LQHRTFCKLPAEPGPCKASIPAFYYNWAAKKCQLFHYGGCKGNANRFSTIEKCRRACVG</sequence>
<comment type="function">
    <text evidence="3">DaE1 and DaE2 are serine protease inhibitors that inhibit voltage-gated potassium channels Kv1.1/KCNA1 channels (IC(50)=300 nM).</text>
</comment>
<comment type="subcellular location">
    <subcellularLocation>
        <location>Secreted</location>
    </subcellularLocation>
</comment>
<comment type="tissue specificity">
    <text>Expressed by the venom gland.</text>
</comment>
<comment type="mass spectrometry">
    <molecule>Kunitz-type serine protease inhibitor dendrotoxin DaE1</molecule>
</comment>
<comment type="mass spectrometry">
    <molecule>Kunitz-type protease inhibitor dendrotoxin DaE2</molecule>
</comment>
<comment type="miscellaneous">
    <text>Neither DaE1 nor DaE2 affect Kir2.1/KCNJ2 channels.</text>
</comment>
<comment type="similarity">
    <text evidence="4">Belongs to the venom Kunitz-type family.</text>
</comment>
<proteinExistence type="evidence at protein level"/>
<evidence type="ECO:0000250" key="1"/>
<evidence type="ECO:0000255" key="2">
    <source>
        <dbReference type="PROSITE-ProRule" id="PRU00031"/>
    </source>
</evidence>
<evidence type="ECO:0000269" key="3">
    <source>
    </source>
</evidence>
<evidence type="ECO:0000305" key="4"/>
<organism>
    <name type="scientific">Dendroaspis angusticeps</name>
    <name type="common">Eastern green mamba</name>
    <name type="synonym">Naja angusticeps</name>
    <dbReference type="NCBI Taxonomy" id="8618"/>
    <lineage>
        <taxon>Eukaryota</taxon>
        <taxon>Metazoa</taxon>
        <taxon>Chordata</taxon>
        <taxon>Craniata</taxon>
        <taxon>Vertebrata</taxon>
        <taxon>Euteleostomi</taxon>
        <taxon>Lepidosauria</taxon>
        <taxon>Squamata</taxon>
        <taxon>Bifurcata</taxon>
        <taxon>Unidentata</taxon>
        <taxon>Episquamata</taxon>
        <taxon>Toxicofera</taxon>
        <taxon>Serpentes</taxon>
        <taxon>Colubroidea</taxon>
        <taxon>Elapidae</taxon>
        <taxon>Elapinae</taxon>
        <taxon>Dendroaspis</taxon>
    </lineage>
</organism>
<reference key="1">
    <citation type="journal article" date="2001" name="FEBS Lett.">
        <title>New polypeptide components purified from mamba venom.</title>
        <authorList>
            <person name="Tytgat J."/>
            <person name="Vandenberghe I."/>
            <person name="Ulens C."/>
            <person name="Van Beeumen J."/>
        </authorList>
    </citation>
    <scope>PROTEIN SEQUENCE</scope>
    <scope>FUNCTION</scope>
    <scope>MASS SPECTROMETRY</scope>
    <source>
        <tissue>Venom</tissue>
    </source>
</reference>